<name>KCNE5_MOUSE</name>
<proteinExistence type="evidence at transcript level"/>
<sequence length="143" mass="14968">MNCSESQRLQTLLNRLLLELHHRGNASGLGIGTGPSMGMGVVPDPFVGREATSAKGNDAYLYILLIMIFYACLAGGLILAYTRSRKLVEAKDEPPLACVAEQEWVPAAIASADPENGQGLLAEGGHQLAAGALPALAQGAERV</sequence>
<dbReference type="EMBL" id="AJ131398">
    <property type="protein sequence ID" value="CAB58362.1"/>
    <property type="molecule type" value="mRNA"/>
</dbReference>
<dbReference type="EMBL" id="BC028942">
    <property type="protein sequence ID" value="AAH28942.1"/>
    <property type="molecule type" value="mRNA"/>
</dbReference>
<dbReference type="CCDS" id="CCDS30447.1"/>
<dbReference type="RefSeq" id="NP_067462.1">
    <property type="nucleotide sequence ID" value="NM_021487.1"/>
</dbReference>
<dbReference type="SMR" id="Q9QZ26"/>
<dbReference type="BioGRID" id="211319">
    <property type="interactions" value="1"/>
</dbReference>
<dbReference type="FunCoup" id="Q9QZ26">
    <property type="interactions" value="67"/>
</dbReference>
<dbReference type="STRING" id="10090.ENSMUSP00000127773"/>
<dbReference type="GlyCosmos" id="Q9QZ26">
    <property type="glycosylation" value="2 sites, No reported glycans"/>
</dbReference>
<dbReference type="GlyGen" id="Q9QZ26">
    <property type="glycosylation" value="2 sites, 1 N-linked glycan (2 sites)"/>
</dbReference>
<dbReference type="iPTMnet" id="Q9QZ26"/>
<dbReference type="PhosphoSitePlus" id="Q9QZ26"/>
<dbReference type="PaxDb" id="10090-ENSMUSP00000127773"/>
<dbReference type="ABCD" id="Q9QZ26">
    <property type="antibodies" value="1 sequenced antibody"/>
</dbReference>
<dbReference type="Antibodypedia" id="51261">
    <property type="antibodies" value="116 antibodies from 24 providers"/>
</dbReference>
<dbReference type="DNASU" id="66240"/>
<dbReference type="Ensembl" id="ENSMUST00000134825.3">
    <property type="protein sequence ID" value="ENSMUSP00000127773.2"/>
    <property type="gene ID" value="ENSMUSG00000090122.4"/>
</dbReference>
<dbReference type="GeneID" id="66240"/>
<dbReference type="KEGG" id="mmu:66240"/>
<dbReference type="UCSC" id="uc009ult.1">
    <property type="organism name" value="mouse"/>
</dbReference>
<dbReference type="AGR" id="MGI:1913490"/>
<dbReference type="CTD" id="23630"/>
<dbReference type="MGI" id="MGI:1913490">
    <property type="gene designation" value="Kcne5"/>
</dbReference>
<dbReference type="VEuPathDB" id="HostDB:ENSMUSG00000090122"/>
<dbReference type="eggNOG" id="ENOG502SAHN">
    <property type="taxonomic scope" value="Eukaryota"/>
</dbReference>
<dbReference type="GeneTree" id="ENSGT00940000155001"/>
<dbReference type="HOGENOM" id="CLU_1786304_0_0_1"/>
<dbReference type="InParanoid" id="Q9QZ26"/>
<dbReference type="OMA" id="EPSQACA"/>
<dbReference type="OrthoDB" id="9907547at2759"/>
<dbReference type="PhylomeDB" id="Q9QZ26"/>
<dbReference type="TreeFam" id="TF335981"/>
<dbReference type="Reactome" id="R-MMU-5576890">
    <property type="pathway name" value="Phase 3 - rapid repolarisation"/>
</dbReference>
<dbReference type="Reactome" id="R-MMU-5576893">
    <property type="pathway name" value="Phase 2 - plateau phase"/>
</dbReference>
<dbReference type="BioGRID-ORCS" id="66240">
    <property type="hits" value="2 hits in 77 CRISPR screens"/>
</dbReference>
<dbReference type="PRO" id="PR:Q9QZ26"/>
<dbReference type="Proteomes" id="UP000000589">
    <property type="component" value="Chromosome X"/>
</dbReference>
<dbReference type="RNAct" id="Q9QZ26">
    <property type="molecule type" value="protein"/>
</dbReference>
<dbReference type="Bgee" id="ENSMUSG00000090122">
    <property type="expression patterns" value="Expressed in regional part of spinal cord and 97 other cell types or tissues"/>
</dbReference>
<dbReference type="GO" id="GO:0008076">
    <property type="term" value="C:voltage-gated potassium channel complex"/>
    <property type="evidence" value="ECO:0007669"/>
    <property type="project" value="Ensembl"/>
</dbReference>
<dbReference type="GO" id="GO:0015459">
    <property type="term" value="F:potassium channel regulator activity"/>
    <property type="evidence" value="ECO:0007669"/>
    <property type="project" value="Ensembl"/>
</dbReference>
<dbReference type="GO" id="GO:0044325">
    <property type="term" value="F:transmembrane transporter binding"/>
    <property type="evidence" value="ECO:0007669"/>
    <property type="project" value="Ensembl"/>
</dbReference>
<dbReference type="GO" id="GO:0005249">
    <property type="term" value="F:voltage-gated potassium channel activity"/>
    <property type="evidence" value="ECO:0007669"/>
    <property type="project" value="InterPro"/>
</dbReference>
<dbReference type="GO" id="GO:0086014">
    <property type="term" value="P:atrial cardiac muscle cell action potential"/>
    <property type="evidence" value="ECO:0007669"/>
    <property type="project" value="Ensembl"/>
</dbReference>
<dbReference type="GO" id="GO:1903765">
    <property type="term" value="P:negative regulation of potassium ion export across plasma membrane"/>
    <property type="evidence" value="ECO:0007669"/>
    <property type="project" value="Ensembl"/>
</dbReference>
<dbReference type="GO" id="GO:1901381">
    <property type="term" value="P:positive regulation of potassium ion transmembrane transport"/>
    <property type="evidence" value="ECO:0007669"/>
    <property type="project" value="Ensembl"/>
</dbReference>
<dbReference type="GO" id="GO:0060372">
    <property type="term" value="P:regulation of atrial cardiac muscle cell membrane repolarization"/>
    <property type="evidence" value="ECO:0007669"/>
    <property type="project" value="Ensembl"/>
</dbReference>
<dbReference type="GO" id="GO:0086091">
    <property type="term" value="P:regulation of heart rate by cardiac conduction"/>
    <property type="evidence" value="ECO:0007669"/>
    <property type="project" value="Ensembl"/>
</dbReference>
<dbReference type="GO" id="GO:0060307">
    <property type="term" value="P:regulation of ventricular cardiac muscle cell membrane repolarization"/>
    <property type="evidence" value="ECO:0007669"/>
    <property type="project" value="Ensembl"/>
</dbReference>
<dbReference type="GO" id="GO:0086005">
    <property type="term" value="P:ventricular cardiac muscle cell action potential"/>
    <property type="evidence" value="ECO:0007669"/>
    <property type="project" value="Ensembl"/>
</dbReference>
<dbReference type="InterPro" id="IPR000369">
    <property type="entry name" value="K_chnl_KCNE"/>
</dbReference>
<dbReference type="PANTHER" id="PTHR15282">
    <property type="entry name" value="POTASSIUM VOLTAGE-GATED CHANNEL SUBFAMILY E MEMBER 1, 3"/>
    <property type="match status" value="1"/>
</dbReference>
<dbReference type="PANTHER" id="PTHR15282:SF7">
    <property type="entry name" value="POTASSIUM VOLTAGE-GATED CHANNEL SUBFAMILY E REGULATORY BETA SUBUNIT 5"/>
    <property type="match status" value="1"/>
</dbReference>
<dbReference type="Pfam" id="PF02060">
    <property type="entry name" value="ISK_Channel"/>
    <property type="match status" value="1"/>
</dbReference>
<accession>Q9QZ26</accession>
<keyword id="KW-0325">Glycoprotein</keyword>
<keyword id="KW-0472">Membrane</keyword>
<keyword id="KW-1185">Reference proteome</keyword>
<keyword id="KW-0812">Transmembrane</keyword>
<keyword id="KW-1133">Transmembrane helix</keyword>
<feature type="chain" id="PRO_0000144295" description="Potassium voltage-gated channel subfamily E regulatory beta subunit 5">
    <location>
        <begin position="1"/>
        <end position="143"/>
    </location>
</feature>
<feature type="transmembrane region" description="Helical" evidence="2">
    <location>
        <begin position="61"/>
        <end position="81"/>
    </location>
</feature>
<feature type="topological domain" description="Cytoplasmic" evidence="2">
    <location>
        <begin position="82"/>
        <end position="143"/>
    </location>
</feature>
<feature type="glycosylation site" description="N-linked (GlcNAc...) asparagine" evidence="2">
    <location>
        <position position="2"/>
    </location>
</feature>
<feature type="glycosylation site" description="N-linked (GlcNAc...) asparagine" evidence="2">
    <location>
        <position position="25"/>
    </location>
</feature>
<comment type="function">
    <text evidence="1">Potassium channel ancillary subunit that is essential for generation of some native K(+) currents by virtue of formation of heteromeric ion channel complex with voltage-gated potassium (Kv) channel pore-forming alpha subunits. Functions as an inhibitory beta-subunit of the repolarizing cardiac potassium ion channel KCNQ1.</text>
</comment>
<comment type="subunit">
    <text evidence="1">Interacts with KCNQ1; impairs KCNQ1 localization in lipid rafts and only conducts current upon strong and continued depolarization.</text>
</comment>
<comment type="subcellular location">
    <subcellularLocation>
        <location evidence="1">Membrane</location>
        <topology evidence="1">Single-pass type I membrane protein</topology>
    </subcellularLocation>
</comment>
<comment type="tissue specificity">
    <text evidence="3">Detected in embryonal dorsal root and nerve ganglia, in the somites and in myoepicardial layer of the developing heart wall. Detected at lower levels in the central nervous system (CNS) and in developing limb.</text>
</comment>
<comment type="similarity">
    <text evidence="4">Belongs to the potassium channel KCNE family.</text>
</comment>
<reference key="1">
    <citation type="journal article" date="1999" name="Genomics">
        <title>KCNE1-like gene is deleted in AMME contiguous gene syndrome: Identification and characterization of the human and mouse homologs.</title>
        <authorList>
            <person name="Piccini M."/>
            <person name="Vitelli F."/>
            <person name="Seri M."/>
            <person name="Galietta L.J.V."/>
            <person name="Moran O."/>
            <person name="Bulfone A."/>
            <person name="Banfi S."/>
            <person name="Pober B."/>
            <person name="Renieri A."/>
        </authorList>
    </citation>
    <scope>NUCLEOTIDE SEQUENCE [MRNA]</scope>
    <scope>TISSUE SPECIFICITY</scope>
    <source>
        <tissue>Embryo</tissue>
    </source>
</reference>
<reference key="2">
    <citation type="journal article" date="2004" name="Genome Res.">
        <title>The status, quality, and expansion of the NIH full-length cDNA project: the Mammalian Gene Collection (MGC).</title>
        <authorList>
            <consortium name="The MGC Project Team"/>
        </authorList>
    </citation>
    <scope>NUCLEOTIDE SEQUENCE [LARGE SCALE MRNA]</scope>
    <source>
        <tissue>Retina</tissue>
    </source>
</reference>
<evidence type="ECO:0000250" key="1">
    <source>
        <dbReference type="UniProtKB" id="Q9UJ90"/>
    </source>
</evidence>
<evidence type="ECO:0000255" key="2"/>
<evidence type="ECO:0000269" key="3">
    <source>
    </source>
</evidence>
<evidence type="ECO:0000305" key="4"/>
<protein>
    <recommendedName>
        <fullName>Potassium voltage-gated channel subfamily E regulatory beta subunit 5</fullName>
    </recommendedName>
    <alternativeName>
        <fullName>MinK-like protein</fullName>
    </alternativeName>
    <alternativeName>
        <fullName evidence="1">Potassium voltage-gated channel subfamily E member 1-like protein</fullName>
    </alternativeName>
</protein>
<gene>
    <name type="primary">Kcne5</name>
    <name evidence="1" type="synonym">Kcne1l</name>
</gene>
<organism>
    <name type="scientific">Mus musculus</name>
    <name type="common">Mouse</name>
    <dbReference type="NCBI Taxonomy" id="10090"/>
    <lineage>
        <taxon>Eukaryota</taxon>
        <taxon>Metazoa</taxon>
        <taxon>Chordata</taxon>
        <taxon>Craniata</taxon>
        <taxon>Vertebrata</taxon>
        <taxon>Euteleostomi</taxon>
        <taxon>Mammalia</taxon>
        <taxon>Eutheria</taxon>
        <taxon>Euarchontoglires</taxon>
        <taxon>Glires</taxon>
        <taxon>Rodentia</taxon>
        <taxon>Myomorpha</taxon>
        <taxon>Muroidea</taxon>
        <taxon>Muridae</taxon>
        <taxon>Murinae</taxon>
        <taxon>Mus</taxon>
        <taxon>Mus</taxon>
    </lineage>
</organism>